<proteinExistence type="inferred from homology"/>
<protein>
    <recommendedName>
        <fullName evidence="1">Phenylalanine--tRNA ligase alpha subunit</fullName>
        <ecNumber evidence="1">6.1.1.20</ecNumber>
    </recommendedName>
    <alternativeName>
        <fullName evidence="1">Phenylalanyl-tRNA synthetase alpha subunit</fullName>
        <shortName evidence="1">PheRS</shortName>
    </alternativeName>
</protein>
<reference key="1">
    <citation type="journal article" date="2010" name="Appl. Environ. Microbiol.">
        <title>The genome sequence of Psychrobacter arcticus 273-4, a psychroactive Siberian permafrost bacterium, reveals mechanisms for adaptation to low-temperature growth.</title>
        <authorList>
            <person name="Ayala-del-Rio H.L."/>
            <person name="Chain P.S."/>
            <person name="Grzymski J.J."/>
            <person name="Ponder M.A."/>
            <person name="Ivanova N."/>
            <person name="Bergholz P.W."/>
            <person name="Di Bartolo G."/>
            <person name="Hauser L."/>
            <person name="Land M."/>
            <person name="Bakermans C."/>
            <person name="Rodrigues D."/>
            <person name="Klappenbach J."/>
            <person name="Zarka D."/>
            <person name="Larimer F."/>
            <person name="Richardson P."/>
            <person name="Murray A."/>
            <person name="Thomashow M."/>
            <person name="Tiedje J.M."/>
        </authorList>
    </citation>
    <scope>NUCLEOTIDE SEQUENCE [LARGE SCALE GENOMIC DNA]</scope>
    <source>
        <strain>DSM 17307 / VKM B-2377 / 273-4</strain>
    </source>
</reference>
<dbReference type="EC" id="6.1.1.20" evidence="1"/>
<dbReference type="EMBL" id="CP000082">
    <property type="protein sequence ID" value="AAZ19843.1"/>
    <property type="molecule type" value="Genomic_DNA"/>
</dbReference>
<dbReference type="RefSeq" id="WP_011281251.1">
    <property type="nucleotide sequence ID" value="NC_007204.1"/>
</dbReference>
<dbReference type="SMR" id="Q4FQ65"/>
<dbReference type="STRING" id="259536.Psyc_1996"/>
<dbReference type="KEGG" id="par:Psyc_1996"/>
<dbReference type="eggNOG" id="COG0016">
    <property type="taxonomic scope" value="Bacteria"/>
</dbReference>
<dbReference type="HOGENOM" id="CLU_025086_0_1_6"/>
<dbReference type="OrthoDB" id="9800719at2"/>
<dbReference type="Proteomes" id="UP000000546">
    <property type="component" value="Chromosome"/>
</dbReference>
<dbReference type="GO" id="GO:0005737">
    <property type="term" value="C:cytoplasm"/>
    <property type="evidence" value="ECO:0007669"/>
    <property type="project" value="UniProtKB-SubCell"/>
</dbReference>
<dbReference type="GO" id="GO:0005524">
    <property type="term" value="F:ATP binding"/>
    <property type="evidence" value="ECO:0007669"/>
    <property type="project" value="UniProtKB-UniRule"/>
</dbReference>
<dbReference type="GO" id="GO:0000287">
    <property type="term" value="F:magnesium ion binding"/>
    <property type="evidence" value="ECO:0007669"/>
    <property type="project" value="UniProtKB-UniRule"/>
</dbReference>
<dbReference type="GO" id="GO:0004826">
    <property type="term" value="F:phenylalanine-tRNA ligase activity"/>
    <property type="evidence" value="ECO:0007669"/>
    <property type="project" value="UniProtKB-UniRule"/>
</dbReference>
<dbReference type="GO" id="GO:0000049">
    <property type="term" value="F:tRNA binding"/>
    <property type="evidence" value="ECO:0007669"/>
    <property type="project" value="InterPro"/>
</dbReference>
<dbReference type="GO" id="GO:0006432">
    <property type="term" value="P:phenylalanyl-tRNA aminoacylation"/>
    <property type="evidence" value="ECO:0007669"/>
    <property type="project" value="UniProtKB-UniRule"/>
</dbReference>
<dbReference type="CDD" id="cd00496">
    <property type="entry name" value="PheRS_alpha_core"/>
    <property type="match status" value="1"/>
</dbReference>
<dbReference type="FunFam" id="3.30.930.10:FF:000003">
    <property type="entry name" value="Phenylalanine--tRNA ligase alpha subunit"/>
    <property type="match status" value="1"/>
</dbReference>
<dbReference type="Gene3D" id="3.30.930.10">
    <property type="entry name" value="Bira Bifunctional Protein, Domain 2"/>
    <property type="match status" value="1"/>
</dbReference>
<dbReference type="HAMAP" id="MF_00281">
    <property type="entry name" value="Phe_tRNA_synth_alpha1"/>
    <property type="match status" value="1"/>
</dbReference>
<dbReference type="InterPro" id="IPR006195">
    <property type="entry name" value="aa-tRNA-synth_II"/>
</dbReference>
<dbReference type="InterPro" id="IPR045864">
    <property type="entry name" value="aa-tRNA-synth_II/BPL/LPL"/>
</dbReference>
<dbReference type="InterPro" id="IPR004529">
    <property type="entry name" value="Phe-tRNA-synth_IIc_asu"/>
</dbReference>
<dbReference type="InterPro" id="IPR004188">
    <property type="entry name" value="Phe-tRNA_ligase_II_N"/>
</dbReference>
<dbReference type="InterPro" id="IPR022911">
    <property type="entry name" value="Phe_tRNA_ligase_alpha1_bac"/>
</dbReference>
<dbReference type="InterPro" id="IPR002319">
    <property type="entry name" value="Phenylalanyl-tRNA_Synthase"/>
</dbReference>
<dbReference type="InterPro" id="IPR010978">
    <property type="entry name" value="tRNA-bd_arm"/>
</dbReference>
<dbReference type="NCBIfam" id="TIGR00468">
    <property type="entry name" value="pheS"/>
    <property type="match status" value="1"/>
</dbReference>
<dbReference type="PANTHER" id="PTHR11538:SF41">
    <property type="entry name" value="PHENYLALANINE--TRNA LIGASE, MITOCHONDRIAL"/>
    <property type="match status" value="1"/>
</dbReference>
<dbReference type="PANTHER" id="PTHR11538">
    <property type="entry name" value="PHENYLALANYL-TRNA SYNTHETASE"/>
    <property type="match status" value="1"/>
</dbReference>
<dbReference type="Pfam" id="PF02912">
    <property type="entry name" value="Phe_tRNA-synt_N"/>
    <property type="match status" value="1"/>
</dbReference>
<dbReference type="Pfam" id="PF01409">
    <property type="entry name" value="tRNA-synt_2d"/>
    <property type="match status" value="1"/>
</dbReference>
<dbReference type="SUPFAM" id="SSF55681">
    <property type="entry name" value="Class II aaRS and biotin synthetases"/>
    <property type="match status" value="1"/>
</dbReference>
<dbReference type="SUPFAM" id="SSF46589">
    <property type="entry name" value="tRNA-binding arm"/>
    <property type="match status" value="1"/>
</dbReference>
<dbReference type="PROSITE" id="PS50862">
    <property type="entry name" value="AA_TRNA_LIGASE_II"/>
    <property type="match status" value="1"/>
</dbReference>
<gene>
    <name evidence="1" type="primary">pheS</name>
    <name type="ordered locus">Psyc_1996</name>
</gene>
<keyword id="KW-0030">Aminoacyl-tRNA synthetase</keyword>
<keyword id="KW-0067">ATP-binding</keyword>
<keyword id="KW-0963">Cytoplasm</keyword>
<keyword id="KW-0436">Ligase</keyword>
<keyword id="KW-0460">Magnesium</keyword>
<keyword id="KW-0479">Metal-binding</keyword>
<keyword id="KW-0547">Nucleotide-binding</keyword>
<keyword id="KW-0648">Protein biosynthesis</keyword>
<keyword id="KW-1185">Reference proteome</keyword>
<accession>Q4FQ65</accession>
<organism>
    <name type="scientific">Psychrobacter arcticus (strain DSM 17307 / VKM B-2377 / 273-4)</name>
    <dbReference type="NCBI Taxonomy" id="259536"/>
    <lineage>
        <taxon>Bacteria</taxon>
        <taxon>Pseudomonadati</taxon>
        <taxon>Pseudomonadota</taxon>
        <taxon>Gammaproteobacteria</taxon>
        <taxon>Moraxellales</taxon>
        <taxon>Moraxellaceae</taxon>
        <taxon>Psychrobacter</taxon>
    </lineage>
</organism>
<name>SYFA_PSYA2</name>
<sequence>MTTPAATTDLSALPTLSSELNELNEAQLIEFTSAAEALILQVSDVRLLQDLRVQLTGKKSPLTGWSKQMGKLSNDDKKTYGGWLHEVRSRIQDALTAQQQQLEVVALNAKLASESIDITLPARGGQKGHLHPVTMITQRMQQYFIQAGFNVATGPEVESDYYNFEALNIPSHHPARAMHDTFYFDAHYLLRTHTSPVQIRTMEKNEPPIRIICPGRVYRNDSDQTHSPMFHQLEGLMVTESSTFAELKGLISEFLEAFFAKELTVRFRPSFFPFTEPSAEVDILDDNGKWLEVMGCGMVHPQVLTNCGIDAEKYTGFAFGMGIERFAMLYYGIDDLRLFFQNDVRFLKQFG</sequence>
<feature type="chain" id="PRO_0000232016" description="Phenylalanine--tRNA ligase alpha subunit">
    <location>
        <begin position="1"/>
        <end position="351"/>
    </location>
</feature>
<feature type="binding site" evidence="1">
    <location>
        <position position="276"/>
    </location>
    <ligand>
        <name>Mg(2+)</name>
        <dbReference type="ChEBI" id="CHEBI:18420"/>
        <note>shared with beta subunit</note>
    </ligand>
</feature>
<evidence type="ECO:0000255" key="1">
    <source>
        <dbReference type="HAMAP-Rule" id="MF_00281"/>
    </source>
</evidence>
<comment type="catalytic activity">
    <reaction evidence="1">
        <text>tRNA(Phe) + L-phenylalanine + ATP = L-phenylalanyl-tRNA(Phe) + AMP + diphosphate + H(+)</text>
        <dbReference type="Rhea" id="RHEA:19413"/>
        <dbReference type="Rhea" id="RHEA-COMP:9668"/>
        <dbReference type="Rhea" id="RHEA-COMP:9699"/>
        <dbReference type="ChEBI" id="CHEBI:15378"/>
        <dbReference type="ChEBI" id="CHEBI:30616"/>
        <dbReference type="ChEBI" id="CHEBI:33019"/>
        <dbReference type="ChEBI" id="CHEBI:58095"/>
        <dbReference type="ChEBI" id="CHEBI:78442"/>
        <dbReference type="ChEBI" id="CHEBI:78531"/>
        <dbReference type="ChEBI" id="CHEBI:456215"/>
        <dbReference type="EC" id="6.1.1.20"/>
    </reaction>
</comment>
<comment type="cofactor">
    <cofactor evidence="1">
        <name>Mg(2+)</name>
        <dbReference type="ChEBI" id="CHEBI:18420"/>
    </cofactor>
    <text evidence="1">Binds 2 magnesium ions per tetramer.</text>
</comment>
<comment type="subunit">
    <text evidence="1">Tetramer of two alpha and two beta subunits.</text>
</comment>
<comment type="subcellular location">
    <subcellularLocation>
        <location evidence="1">Cytoplasm</location>
    </subcellularLocation>
</comment>
<comment type="similarity">
    <text evidence="1">Belongs to the class-II aminoacyl-tRNA synthetase family. Phe-tRNA synthetase alpha subunit type 1 subfamily.</text>
</comment>